<proteinExistence type="inferred from homology"/>
<reference key="1">
    <citation type="journal article" date="2004" name="Nature">
        <title>Genome evolution in yeasts.</title>
        <authorList>
            <person name="Dujon B."/>
            <person name="Sherman D."/>
            <person name="Fischer G."/>
            <person name="Durrens P."/>
            <person name="Casaregola S."/>
            <person name="Lafontaine I."/>
            <person name="de Montigny J."/>
            <person name="Marck C."/>
            <person name="Neuveglise C."/>
            <person name="Talla E."/>
            <person name="Goffard N."/>
            <person name="Frangeul L."/>
            <person name="Aigle M."/>
            <person name="Anthouard V."/>
            <person name="Babour A."/>
            <person name="Barbe V."/>
            <person name="Barnay S."/>
            <person name="Blanchin S."/>
            <person name="Beckerich J.-M."/>
            <person name="Beyne E."/>
            <person name="Bleykasten C."/>
            <person name="Boisrame A."/>
            <person name="Boyer J."/>
            <person name="Cattolico L."/>
            <person name="Confanioleri F."/>
            <person name="de Daruvar A."/>
            <person name="Despons L."/>
            <person name="Fabre E."/>
            <person name="Fairhead C."/>
            <person name="Ferry-Dumazet H."/>
            <person name="Groppi A."/>
            <person name="Hantraye F."/>
            <person name="Hennequin C."/>
            <person name="Jauniaux N."/>
            <person name="Joyet P."/>
            <person name="Kachouri R."/>
            <person name="Kerrest A."/>
            <person name="Koszul R."/>
            <person name="Lemaire M."/>
            <person name="Lesur I."/>
            <person name="Ma L."/>
            <person name="Muller H."/>
            <person name="Nicaud J.-M."/>
            <person name="Nikolski M."/>
            <person name="Oztas S."/>
            <person name="Ozier-Kalogeropoulos O."/>
            <person name="Pellenz S."/>
            <person name="Potier S."/>
            <person name="Richard G.-F."/>
            <person name="Straub M.-L."/>
            <person name="Suleau A."/>
            <person name="Swennen D."/>
            <person name="Tekaia F."/>
            <person name="Wesolowski-Louvel M."/>
            <person name="Westhof E."/>
            <person name="Wirth B."/>
            <person name="Zeniou-Meyer M."/>
            <person name="Zivanovic Y."/>
            <person name="Bolotin-Fukuhara M."/>
            <person name="Thierry A."/>
            <person name="Bouchier C."/>
            <person name="Caudron B."/>
            <person name="Scarpelli C."/>
            <person name="Gaillardin C."/>
            <person name="Weissenbach J."/>
            <person name="Wincker P."/>
            <person name="Souciet J.-L."/>
        </authorList>
    </citation>
    <scope>NUCLEOTIDE SEQUENCE [LARGE SCALE GENOMIC DNA]</scope>
    <source>
        <strain>ATCC 36239 / CBS 767 / BCRC 21394 / JCM 1990 / NBRC 0083 / IGC 2968</strain>
    </source>
</reference>
<keyword id="KW-0072">Autophagy</keyword>
<keyword id="KW-0967">Endosome</keyword>
<keyword id="KW-0325">Glycoprotein</keyword>
<keyword id="KW-0378">Hydrolase</keyword>
<keyword id="KW-0442">Lipid degradation</keyword>
<keyword id="KW-0443">Lipid metabolism</keyword>
<keyword id="KW-0472">Membrane</keyword>
<keyword id="KW-1185">Reference proteome</keyword>
<keyword id="KW-0735">Signal-anchor</keyword>
<keyword id="KW-0812">Transmembrane</keyword>
<keyword id="KW-1133">Transmembrane helix</keyword>
<comment type="function">
    <text evidence="1">Lipase which is essential for lysis of subvacuolar cytoplasm to vacuole targeted bodies and intravacuolar autophagic bodies. Involved in the lysis of intravacuolar multivesicular body (MVB) vesicles. The intravacuolar membrane disintegration by ATG15 is critical to life span extension (By similarity).</text>
</comment>
<comment type="catalytic activity">
    <reaction>
        <text>a triacylglycerol + H2O = a diacylglycerol + a fatty acid + H(+)</text>
        <dbReference type="Rhea" id="RHEA:12044"/>
        <dbReference type="ChEBI" id="CHEBI:15377"/>
        <dbReference type="ChEBI" id="CHEBI:15378"/>
        <dbReference type="ChEBI" id="CHEBI:17855"/>
        <dbReference type="ChEBI" id="CHEBI:18035"/>
        <dbReference type="ChEBI" id="CHEBI:28868"/>
        <dbReference type="EC" id="3.1.1.3"/>
    </reaction>
</comment>
<comment type="subunit">
    <text evidence="1">Binds to both phosphatidylinositol (PI) and phosphatidylinositol 3,5-bisphosphate (PIP2).</text>
</comment>
<comment type="subcellular location">
    <subcellularLocation>
        <location evidence="2">Endosome</location>
        <location evidence="2">Multivesicular body membrane</location>
        <topology evidence="2">Single-pass type II membrane protein</topology>
    </subcellularLocation>
    <subcellularLocation>
        <location evidence="2">Prevacuolar compartment membrane</location>
        <topology evidence="2">Single-pass type II membrane protein</topology>
    </subcellularLocation>
    <text evidence="2">From ER, targeted to vacuolar lumen at the MVB vesicles via the Golgi and the prevacuolar compartment (PVC).</text>
</comment>
<comment type="similarity">
    <text evidence="6">Belongs to the AB hydrolase superfamily. Lipase family.</text>
</comment>
<evidence type="ECO:0000250" key="1"/>
<evidence type="ECO:0000250" key="2">
    <source>
        <dbReference type="UniProtKB" id="P25641"/>
    </source>
</evidence>
<evidence type="ECO:0000255" key="3"/>
<evidence type="ECO:0000255" key="4">
    <source>
        <dbReference type="PROSITE-ProRule" id="PRU10037"/>
    </source>
</evidence>
<evidence type="ECO:0000256" key="5">
    <source>
        <dbReference type="SAM" id="MobiDB-lite"/>
    </source>
</evidence>
<evidence type="ECO:0000305" key="6"/>
<name>ATG15_DEBHA</name>
<gene>
    <name type="primary">ATG15</name>
    <name type="ordered locus">DEHA2F12364g</name>
</gene>
<feature type="chain" id="PRO_0000090367" description="Putative lipase ATG15">
    <location>
        <begin position="1"/>
        <end position="615"/>
    </location>
</feature>
<feature type="topological domain" description="Cytoplasmic" evidence="3">
    <location>
        <begin position="1"/>
        <end position="22"/>
    </location>
</feature>
<feature type="transmembrane region" description="Helical; Signal-anchor for type II membrane protein" evidence="3">
    <location>
        <begin position="23"/>
        <end position="43"/>
    </location>
</feature>
<feature type="topological domain" description="Lumenal" evidence="3">
    <location>
        <begin position="44"/>
        <end position="615"/>
    </location>
</feature>
<feature type="region of interest" description="Disordered" evidence="5">
    <location>
        <begin position="520"/>
        <end position="559"/>
    </location>
</feature>
<feature type="compositionally biased region" description="Pro residues" evidence="5">
    <location>
        <begin position="525"/>
        <end position="536"/>
    </location>
</feature>
<feature type="compositionally biased region" description="Polar residues" evidence="5">
    <location>
        <begin position="538"/>
        <end position="559"/>
    </location>
</feature>
<feature type="active site" description="Charge relay system" evidence="4">
    <location>
        <position position="378"/>
    </location>
</feature>
<feature type="glycosylation site" description="N-linked (GlcNAc...) asparagine" evidence="3">
    <location>
        <position position="253"/>
    </location>
</feature>
<feature type="glycosylation site" description="N-linked (GlcNAc...) asparagine" evidence="3">
    <location>
        <position position="276"/>
    </location>
</feature>
<feature type="glycosylation site" description="N-linked (GlcNAc...) asparagine" evidence="3">
    <location>
        <position position="360"/>
    </location>
</feature>
<feature type="glycosylation site" description="N-linked (GlcNAc...) asparagine" evidence="3">
    <location>
        <position position="551"/>
    </location>
</feature>
<dbReference type="EC" id="3.1.1.3"/>
<dbReference type="EMBL" id="CR382138">
    <property type="protein sequence ID" value="CAR66329.1"/>
    <property type="molecule type" value="Genomic_DNA"/>
</dbReference>
<dbReference type="RefSeq" id="XP_002770804.1">
    <property type="nucleotide sequence ID" value="XM_002770758.1"/>
</dbReference>
<dbReference type="FunCoup" id="Q6BLM0">
    <property type="interactions" value="72"/>
</dbReference>
<dbReference type="STRING" id="284592.Q6BLM0"/>
<dbReference type="ESTHER" id="debha-atg15">
    <property type="family name" value="ATG15-related-lipase"/>
</dbReference>
<dbReference type="GlyCosmos" id="Q6BLM0">
    <property type="glycosylation" value="4 sites, No reported glycans"/>
</dbReference>
<dbReference type="GeneID" id="8998954"/>
<dbReference type="KEGG" id="dha:DEHA2F12364g"/>
<dbReference type="VEuPathDB" id="FungiDB:DEHA2F12364g"/>
<dbReference type="eggNOG" id="KOG4540">
    <property type="taxonomic scope" value="Eukaryota"/>
</dbReference>
<dbReference type="HOGENOM" id="CLU_028295_0_2_1"/>
<dbReference type="InParanoid" id="Q6BLM0"/>
<dbReference type="OMA" id="TYHFGHT"/>
<dbReference type="OrthoDB" id="58570at2759"/>
<dbReference type="Proteomes" id="UP000000599">
    <property type="component" value="Chromosome F"/>
</dbReference>
<dbReference type="GO" id="GO:0032585">
    <property type="term" value="C:multivesicular body membrane"/>
    <property type="evidence" value="ECO:0007669"/>
    <property type="project" value="UniProtKB-SubCell"/>
</dbReference>
<dbReference type="GO" id="GO:0005775">
    <property type="term" value="C:vacuolar lumen"/>
    <property type="evidence" value="ECO:0007669"/>
    <property type="project" value="TreeGrafter"/>
</dbReference>
<dbReference type="GO" id="GO:0004620">
    <property type="term" value="F:phospholipase activity"/>
    <property type="evidence" value="ECO:0007669"/>
    <property type="project" value="TreeGrafter"/>
</dbReference>
<dbReference type="GO" id="GO:0004806">
    <property type="term" value="F:triacylglycerol lipase activity"/>
    <property type="evidence" value="ECO:0007669"/>
    <property type="project" value="UniProtKB-EC"/>
</dbReference>
<dbReference type="GO" id="GO:0034496">
    <property type="term" value="P:multivesicular body membrane disassembly"/>
    <property type="evidence" value="ECO:0007669"/>
    <property type="project" value="TreeGrafter"/>
</dbReference>
<dbReference type="GO" id="GO:0046461">
    <property type="term" value="P:neutral lipid catabolic process"/>
    <property type="evidence" value="ECO:0007669"/>
    <property type="project" value="TreeGrafter"/>
</dbReference>
<dbReference type="GO" id="GO:0006660">
    <property type="term" value="P:phosphatidylserine catabolic process"/>
    <property type="evidence" value="ECO:0007669"/>
    <property type="project" value="TreeGrafter"/>
</dbReference>
<dbReference type="GO" id="GO:0034727">
    <property type="term" value="P:piecemeal microautophagy of the nucleus"/>
    <property type="evidence" value="ECO:0007669"/>
    <property type="project" value="TreeGrafter"/>
</dbReference>
<dbReference type="CDD" id="cd00519">
    <property type="entry name" value="Lipase_3"/>
    <property type="match status" value="1"/>
</dbReference>
<dbReference type="Gene3D" id="3.40.50.1820">
    <property type="entry name" value="alpha/beta hydrolase"/>
    <property type="match status" value="1"/>
</dbReference>
<dbReference type="InterPro" id="IPR029058">
    <property type="entry name" value="AB_hydrolase_fold"/>
</dbReference>
<dbReference type="InterPro" id="IPR050805">
    <property type="entry name" value="ATG15_Lipase"/>
</dbReference>
<dbReference type="InterPro" id="IPR002921">
    <property type="entry name" value="Fungal_lipase-type"/>
</dbReference>
<dbReference type="PANTHER" id="PTHR47175">
    <property type="entry name" value="LIPASE ATG15-RELATED"/>
    <property type="match status" value="1"/>
</dbReference>
<dbReference type="PANTHER" id="PTHR47175:SF2">
    <property type="entry name" value="LIPASE ATG15-RELATED"/>
    <property type="match status" value="1"/>
</dbReference>
<dbReference type="Pfam" id="PF01764">
    <property type="entry name" value="Lipase_3"/>
    <property type="match status" value="1"/>
</dbReference>
<dbReference type="SUPFAM" id="SSF53474">
    <property type="entry name" value="alpha/beta-Hydrolases"/>
    <property type="match status" value="1"/>
</dbReference>
<dbReference type="PROSITE" id="PS00120">
    <property type="entry name" value="LIPASE_SER"/>
    <property type="match status" value="1"/>
</dbReference>
<organism>
    <name type="scientific">Debaryomyces hansenii (strain ATCC 36239 / CBS 767 / BCRC 21394 / JCM 1990 / NBRC 0083 / IGC 2968)</name>
    <name type="common">Yeast</name>
    <name type="synonym">Torulaspora hansenii</name>
    <dbReference type="NCBI Taxonomy" id="284592"/>
    <lineage>
        <taxon>Eukaryota</taxon>
        <taxon>Fungi</taxon>
        <taxon>Dikarya</taxon>
        <taxon>Ascomycota</taxon>
        <taxon>Saccharomycotina</taxon>
        <taxon>Pichiomycetes</taxon>
        <taxon>Debaryomycetaceae</taxon>
        <taxon>Debaryomyces</taxon>
    </lineage>
</organism>
<accession>Q6BLM0</accession>
<accession>B5RUF1</accession>
<protein>
    <recommendedName>
        <fullName>Putative lipase ATG15</fullName>
        <ecNumber>3.1.1.3</ecNumber>
    </recommendedName>
    <alternativeName>
        <fullName>Autophagy-related protein 15</fullName>
    </alternativeName>
</protein>
<sequence length="615" mass="69083">MKQLGEEHPLISTKRPRAKKRRSIAICAAVLTLIAFGFIRFVPKDILAGGWYEGEKDGLSALDNEEVRDMQTDGTTFELKHIFHRGTGSHNYMVHRRLDVTKEYLEAHSEELEELTTMQTSEVDESNLQDVYDAYDWPQAHTGKNPWTIKLQIRQSPTNGVVKRLKERHTPNFLDSYLAYALSVKGNPALLNKIELEWEDEHEIPIPDVKDRDTVVSLATISSNAYVKFPKDDKEKKRSDWIDVGDPWVPDENHTDINFGWADDGLRGHVFVSTDNKTVVIGIKGTSGAGLIGTGPEETTANDKLNDNLLFSCCCARVGYMWTTVCDCYQKAYTCDQDCLEKELMRQDRYYQATLDLYRNVSQLYDPSTTNIWVTGHSLGGALASLVGRTYGLPAVAFEAPGEMLATRRLHLPQPPGLPKHLENIWHFGNTADPIYMGVCNGVSSSCNVAGYAMETACHTAHQCVYDVVTDMGWRVNLLNHRIHTVIDDIILAYNDTPPCVQQPPCRDCFNWRFTSSDDNKNDEPPLPNPLHPKPPSTVRSSNMPHEQSPNASRSLSSLCTEPSCTSSFQSVSPSFSSQLPSHPSQNPQRCLRRTWYGRCSKWGHNSAAHHVSSI</sequence>